<name>PEPQ_SHESA</name>
<accession>A0KR51</accession>
<dbReference type="EC" id="3.4.13.9" evidence="1"/>
<dbReference type="EMBL" id="CP000469">
    <property type="protein sequence ID" value="ABK46270.1"/>
    <property type="molecule type" value="Genomic_DNA"/>
</dbReference>
<dbReference type="RefSeq" id="WP_011715318.1">
    <property type="nucleotide sequence ID" value="NC_008577.1"/>
</dbReference>
<dbReference type="SMR" id="A0KR51"/>
<dbReference type="STRING" id="94122.Shewana3_0025"/>
<dbReference type="MEROPS" id="M24.003"/>
<dbReference type="KEGG" id="shn:Shewana3_0025"/>
<dbReference type="eggNOG" id="COG0006">
    <property type="taxonomic scope" value="Bacteria"/>
</dbReference>
<dbReference type="HOGENOM" id="CLU_050675_0_0_6"/>
<dbReference type="OrthoDB" id="9806388at2"/>
<dbReference type="Proteomes" id="UP000002589">
    <property type="component" value="Chromosome"/>
</dbReference>
<dbReference type="GO" id="GO:0005829">
    <property type="term" value="C:cytosol"/>
    <property type="evidence" value="ECO:0007669"/>
    <property type="project" value="TreeGrafter"/>
</dbReference>
<dbReference type="GO" id="GO:0004177">
    <property type="term" value="F:aminopeptidase activity"/>
    <property type="evidence" value="ECO:0007669"/>
    <property type="project" value="TreeGrafter"/>
</dbReference>
<dbReference type="GO" id="GO:0046872">
    <property type="term" value="F:metal ion binding"/>
    <property type="evidence" value="ECO:0007669"/>
    <property type="project" value="UniProtKB-KW"/>
</dbReference>
<dbReference type="GO" id="GO:0008235">
    <property type="term" value="F:metalloexopeptidase activity"/>
    <property type="evidence" value="ECO:0007669"/>
    <property type="project" value="UniProtKB-UniRule"/>
</dbReference>
<dbReference type="GO" id="GO:0016795">
    <property type="term" value="F:phosphoric triester hydrolase activity"/>
    <property type="evidence" value="ECO:0007669"/>
    <property type="project" value="InterPro"/>
</dbReference>
<dbReference type="GO" id="GO:0102009">
    <property type="term" value="F:proline dipeptidase activity"/>
    <property type="evidence" value="ECO:0007669"/>
    <property type="project" value="UniProtKB-EC"/>
</dbReference>
<dbReference type="GO" id="GO:0006508">
    <property type="term" value="P:proteolysis"/>
    <property type="evidence" value="ECO:0007669"/>
    <property type="project" value="UniProtKB-KW"/>
</dbReference>
<dbReference type="CDD" id="cd01087">
    <property type="entry name" value="Prolidase"/>
    <property type="match status" value="1"/>
</dbReference>
<dbReference type="Gene3D" id="3.90.230.10">
    <property type="entry name" value="Creatinase/methionine aminopeptidase superfamily"/>
    <property type="match status" value="1"/>
</dbReference>
<dbReference type="Gene3D" id="3.40.350.10">
    <property type="entry name" value="Creatinase/prolidase N-terminal domain"/>
    <property type="match status" value="1"/>
</dbReference>
<dbReference type="HAMAP" id="MF_01279">
    <property type="entry name" value="X_Pro_dipeptid"/>
    <property type="match status" value="1"/>
</dbReference>
<dbReference type="InterPro" id="IPR029149">
    <property type="entry name" value="Creatin/AminoP/Spt16_N"/>
</dbReference>
<dbReference type="InterPro" id="IPR036005">
    <property type="entry name" value="Creatinase/aminopeptidase-like"/>
</dbReference>
<dbReference type="InterPro" id="IPR048819">
    <property type="entry name" value="PepQ_N"/>
</dbReference>
<dbReference type="InterPro" id="IPR000994">
    <property type="entry name" value="Pept_M24"/>
</dbReference>
<dbReference type="InterPro" id="IPR001131">
    <property type="entry name" value="Peptidase_M24B_aminopep-P_CS"/>
</dbReference>
<dbReference type="InterPro" id="IPR052433">
    <property type="entry name" value="X-Pro_dipept-like"/>
</dbReference>
<dbReference type="InterPro" id="IPR022846">
    <property type="entry name" value="X_Pro_dipept"/>
</dbReference>
<dbReference type="NCBIfam" id="NF010133">
    <property type="entry name" value="PRK13607.1"/>
    <property type="match status" value="1"/>
</dbReference>
<dbReference type="PANTHER" id="PTHR43226">
    <property type="entry name" value="XAA-PRO AMINOPEPTIDASE 3"/>
    <property type="match status" value="1"/>
</dbReference>
<dbReference type="PANTHER" id="PTHR43226:SF8">
    <property type="entry name" value="XAA-PRO DIPEPTIDASE"/>
    <property type="match status" value="1"/>
</dbReference>
<dbReference type="Pfam" id="PF21216">
    <property type="entry name" value="PepQ_N"/>
    <property type="match status" value="1"/>
</dbReference>
<dbReference type="Pfam" id="PF00557">
    <property type="entry name" value="Peptidase_M24"/>
    <property type="match status" value="1"/>
</dbReference>
<dbReference type="SUPFAM" id="SSF55920">
    <property type="entry name" value="Creatinase/aminopeptidase"/>
    <property type="match status" value="1"/>
</dbReference>
<dbReference type="SUPFAM" id="SSF53092">
    <property type="entry name" value="Creatinase/prolidase N-terminal domain"/>
    <property type="match status" value="1"/>
</dbReference>
<dbReference type="PROSITE" id="PS00491">
    <property type="entry name" value="PROLINE_PEPTIDASE"/>
    <property type="match status" value="1"/>
</dbReference>
<protein>
    <recommendedName>
        <fullName evidence="1">Xaa-Pro dipeptidase</fullName>
        <shortName evidence="1">X-Pro dipeptidase</shortName>
        <ecNumber evidence="1">3.4.13.9</ecNumber>
    </recommendedName>
    <alternativeName>
        <fullName evidence="1">Imidodipeptidase</fullName>
    </alternativeName>
    <alternativeName>
        <fullName evidence="1">Proline dipeptidase</fullName>
        <shortName evidence="1">Prolidase</shortName>
    </alternativeName>
</protein>
<evidence type="ECO:0000255" key="1">
    <source>
        <dbReference type="HAMAP-Rule" id="MF_01279"/>
    </source>
</evidence>
<comment type="function">
    <text evidence="1">Splits dipeptides with a prolyl residue in the C-terminal position.</text>
</comment>
<comment type="catalytic activity">
    <reaction evidence="1">
        <text>Xaa-L-Pro dipeptide + H2O = an L-alpha-amino acid + L-proline</text>
        <dbReference type="Rhea" id="RHEA:76407"/>
        <dbReference type="ChEBI" id="CHEBI:15377"/>
        <dbReference type="ChEBI" id="CHEBI:59869"/>
        <dbReference type="ChEBI" id="CHEBI:60039"/>
        <dbReference type="ChEBI" id="CHEBI:195196"/>
        <dbReference type="EC" id="3.4.13.9"/>
    </reaction>
</comment>
<comment type="cofactor">
    <cofactor evidence="1">
        <name>Mn(2+)</name>
        <dbReference type="ChEBI" id="CHEBI:29035"/>
    </cofactor>
    <text evidence="1">Binds 2 manganese ions per subunit.</text>
</comment>
<comment type="similarity">
    <text evidence="1">Belongs to the peptidase M24B family. Bacterial-type prolidase subfamily.</text>
</comment>
<gene>
    <name evidence="1" type="primary">pepQ</name>
    <name type="ordered locus">Shewana3_0025</name>
</gene>
<reference key="1">
    <citation type="submission" date="2006-09" db="EMBL/GenBank/DDBJ databases">
        <title>Complete sequence of chromosome 1 of Shewanella sp. ANA-3.</title>
        <authorList>
            <person name="Copeland A."/>
            <person name="Lucas S."/>
            <person name="Lapidus A."/>
            <person name="Barry K."/>
            <person name="Detter J.C."/>
            <person name="Glavina del Rio T."/>
            <person name="Hammon N."/>
            <person name="Israni S."/>
            <person name="Dalin E."/>
            <person name="Tice H."/>
            <person name="Pitluck S."/>
            <person name="Chertkov O."/>
            <person name="Brettin T."/>
            <person name="Bruce D."/>
            <person name="Han C."/>
            <person name="Tapia R."/>
            <person name="Gilna P."/>
            <person name="Schmutz J."/>
            <person name="Larimer F."/>
            <person name="Land M."/>
            <person name="Hauser L."/>
            <person name="Kyrpides N."/>
            <person name="Kim E."/>
            <person name="Newman D."/>
            <person name="Salticov C."/>
            <person name="Konstantinidis K."/>
            <person name="Klappenback J."/>
            <person name="Tiedje J."/>
            <person name="Richardson P."/>
        </authorList>
    </citation>
    <scope>NUCLEOTIDE SEQUENCE [LARGE SCALE GENOMIC DNA]</scope>
    <source>
        <strain>ANA-3</strain>
    </source>
</reference>
<sequence length="439" mass="49984">MDHLAHHYHAHIAELNRRVAEIVSREALSGLVIHSGQPHRMFLDDINYPFKANPHFKAWLPVLDNPNCWLVVNGRDKPQLIFYRPVDFWHKVSDVPEMFWTEHFEIKLLTKADKVAELLPSDITNWAYLGEHLDVAEVLGFTSRNPDSVMSYLHFHRTTKTEYELECMRRANQIAVQGHLAAKNAFYNGASEFEIQQQYLSAVGQGENEVPYGNIIALNQNAAILHYTALEHQNPARRLSFLIDAGASYFGYASDITRTYAFEKNRFDELITAMNKAQLELIDMMRPGVRYPDLHLATHGKVAQMLLDFELATGDAQGLVDQGITSAFFPHGLGHMLGLQVHDVGGFSFDERGTHIPAPEAHPFLRCTRILAPNQVLTMEPGLYIIDTLLNELKQDSRGQQINWRTVDELRPFGGIRIEDNVIVHQDRNENMTRELGLA</sequence>
<proteinExistence type="inferred from homology"/>
<keyword id="KW-0224">Dipeptidase</keyword>
<keyword id="KW-0378">Hydrolase</keyword>
<keyword id="KW-0464">Manganese</keyword>
<keyword id="KW-0479">Metal-binding</keyword>
<keyword id="KW-0482">Metalloprotease</keyword>
<keyword id="KW-0645">Protease</keyword>
<organism>
    <name type="scientific">Shewanella sp. (strain ANA-3)</name>
    <dbReference type="NCBI Taxonomy" id="94122"/>
    <lineage>
        <taxon>Bacteria</taxon>
        <taxon>Pseudomonadati</taxon>
        <taxon>Pseudomonadota</taxon>
        <taxon>Gammaproteobacteria</taxon>
        <taxon>Alteromonadales</taxon>
        <taxon>Shewanellaceae</taxon>
        <taxon>Shewanella</taxon>
    </lineage>
</organism>
<feature type="chain" id="PRO_0000303862" description="Xaa-Pro dipeptidase">
    <location>
        <begin position="1"/>
        <end position="439"/>
    </location>
</feature>
<feature type="binding site" evidence="1">
    <location>
        <position position="244"/>
    </location>
    <ligand>
        <name>Mn(2+)</name>
        <dbReference type="ChEBI" id="CHEBI:29035"/>
        <label>2</label>
    </ligand>
</feature>
<feature type="binding site" evidence="1">
    <location>
        <position position="255"/>
    </location>
    <ligand>
        <name>Mn(2+)</name>
        <dbReference type="ChEBI" id="CHEBI:29035"/>
        <label>1</label>
    </ligand>
</feature>
<feature type="binding site" evidence="1">
    <location>
        <position position="255"/>
    </location>
    <ligand>
        <name>Mn(2+)</name>
        <dbReference type="ChEBI" id="CHEBI:29035"/>
        <label>2</label>
    </ligand>
</feature>
<feature type="binding site" evidence="1">
    <location>
        <position position="335"/>
    </location>
    <ligand>
        <name>Mn(2+)</name>
        <dbReference type="ChEBI" id="CHEBI:29035"/>
        <label>1</label>
    </ligand>
</feature>
<feature type="binding site" evidence="1">
    <location>
        <position position="380"/>
    </location>
    <ligand>
        <name>Mn(2+)</name>
        <dbReference type="ChEBI" id="CHEBI:29035"/>
        <label>1</label>
    </ligand>
</feature>
<feature type="binding site" evidence="1">
    <location>
        <position position="419"/>
    </location>
    <ligand>
        <name>Mn(2+)</name>
        <dbReference type="ChEBI" id="CHEBI:29035"/>
        <label>1</label>
    </ligand>
</feature>
<feature type="binding site" evidence="1">
    <location>
        <position position="419"/>
    </location>
    <ligand>
        <name>Mn(2+)</name>
        <dbReference type="ChEBI" id="CHEBI:29035"/>
        <label>2</label>
    </ligand>
</feature>